<proteinExistence type="evidence at transcript level"/>
<comment type="subunit">
    <text evidence="1">Homodimer and heterodimers.</text>
</comment>
<comment type="subcellular location">
    <subcellularLocation>
        <location evidence="1">Cell membrane</location>
        <topology evidence="1">Multi-pass membrane protein</topology>
    </subcellularLocation>
</comment>
<comment type="similarity">
    <text evidence="3">Belongs to the Casparian strip membrane proteins (CASP) family.</text>
</comment>
<name>CSPL1_EUTHA</name>
<evidence type="ECO:0000250" key="1"/>
<evidence type="ECO:0000255" key="2"/>
<evidence type="ECO:0000305" key="3"/>
<accession>E4MWF4</accession>
<feature type="chain" id="PRO_0000412063" description="CASP-like protein 2B1">
    <location>
        <begin position="1"/>
        <end position="199"/>
    </location>
</feature>
<feature type="topological domain" description="Cytoplasmic" evidence="2">
    <location>
        <begin position="1"/>
        <end position="26"/>
    </location>
</feature>
<feature type="transmembrane region" description="Helical" evidence="2">
    <location>
        <begin position="27"/>
        <end position="47"/>
    </location>
</feature>
<feature type="topological domain" description="Extracellular" evidence="2">
    <location>
        <begin position="48"/>
        <end position="69"/>
    </location>
</feature>
<feature type="transmembrane region" description="Helical" evidence="2">
    <location>
        <begin position="70"/>
        <end position="90"/>
    </location>
</feature>
<feature type="topological domain" description="Cytoplasmic" evidence="2">
    <location>
        <begin position="91"/>
        <end position="106"/>
    </location>
</feature>
<feature type="transmembrane region" description="Helical" evidence="2">
    <location>
        <begin position="107"/>
        <end position="127"/>
    </location>
</feature>
<feature type="topological domain" description="Extracellular" evidence="2">
    <location>
        <begin position="128"/>
        <end position="164"/>
    </location>
</feature>
<feature type="transmembrane region" description="Helical" evidence="2">
    <location>
        <begin position="165"/>
        <end position="185"/>
    </location>
</feature>
<feature type="topological domain" description="Cytoplasmic" evidence="2">
    <location>
        <begin position="186"/>
        <end position="199"/>
    </location>
</feature>
<keyword id="KW-1003">Cell membrane</keyword>
<keyword id="KW-0472">Membrane</keyword>
<keyword id="KW-0812">Transmembrane</keyword>
<keyword id="KW-1133">Transmembrane helix</keyword>
<organism>
    <name type="scientific">Eutrema halophilum</name>
    <name type="common">Salt cress</name>
    <name type="synonym">Sisymbrium halophilum</name>
    <dbReference type="NCBI Taxonomy" id="98038"/>
    <lineage>
        <taxon>Eukaryota</taxon>
        <taxon>Viridiplantae</taxon>
        <taxon>Streptophyta</taxon>
        <taxon>Embryophyta</taxon>
        <taxon>Tracheophyta</taxon>
        <taxon>Spermatophyta</taxon>
        <taxon>Magnoliopsida</taxon>
        <taxon>eudicotyledons</taxon>
        <taxon>Gunneridae</taxon>
        <taxon>Pentapetalae</taxon>
        <taxon>rosids</taxon>
        <taxon>malvids</taxon>
        <taxon>Brassicales</taxon>
        <taxon>Brassicaceae</taxon>
        <taxon>Eutremeae</taxon>
        <taxon>Eutrema</taxon>
    </lineage>
</organism>
<protein>
    <recommendedName>
        <fullName>CASP-like protein 2B1</fullName>
        <shortName>ThCASPL2B1</shortName>
    </recommendedName>
</protein>
<dbReference type="EMBL" id="AK352851">
    <property type="protein sequence ID" value="BAJ33937.1"/>
    <property type="molecule type" value="mRNA"/>
</dbReference>
<dbReference type="GO" id="GO:0005886">
    <property type="term" value="C:plasma membrane"/>
    <property type="evidence" value="ECO:0007669"/>
    <property type="project" value="UniProtKB-SubCell"/>
</dbReference>
<dbReference type="InterPro" id="IPR006459">
    <property type="entry name" value="CASP/CASPL"/>
</dbReference>
<dbReference type="InterPro" id="IPR006702">
    <property type="entry name" value="CASP_dom"/>
</dbReference>
<dbReference type="NCBIfam" id="TIGR01569">
    <property type="entry name" value="A_tha_TIGR01569"/>
    <property type="match status" value="1"/>
</dbReference>
<dbReference type="PANTHER" id="PTHR33573:SF64">
    <property type="entry name" value="CASP-LIKE PROTEIN 2B1"/>
    <property type="match status" value="1"/>
</dbReference>
<dbReference type="PANTHER" id="PTHR33573">
    <property type="entry name" value="CASP-LIKE PROTEIN 4A4"/>
    <property type="match status" value="1"/>
</dbReference>
<dbReference type="Pfam" id="PF04535">
    <property type="entry name" value="CASP_dom"/>
    <property type="match status" value="1"/>
</dbReference>
<reference key="1">
    <citation type="journal article" date="2008" name="BMC Plant Biol.">
        <title>Large-scale collection and annotation of full-length enriched cDNAs from a model halophyte, Thellungiella halophila.</title>
        <authorList>
            <person name="Taji T."/>
            <person name="Sakurai T."/>
            <person name="Mochida K."/>
            <person name="Ishiwata A."/>
            <person name="Kurotani A."/>
            <person name="Totoki Y."/>
            <person name="Toyoda A."/>
            <person name="Sakaki Y."/>
            <person name="Seki M."/>
            <person name="Ono H."/>
            <person name="Sakata Y."/>
            <person name="Tanaka S."/>
            <person name="Shinozaki K."/>
        </authorList>
    </citation>
    <scope>NUCLEOTIDE SEQUENCE [LARGE SCALE MRNA]</scope>
    <source>
        <strain>cv. Shandong</strain>
    </source>
</reference>
<reference key="2">
    <citation type="journal article" date="2010" name="BMC Plant Biol.">
        <title>Comparative genomic analysis of 1047 completely sequenced cDNAs from an Arabidopsis-related model halophyte, Thellungiella halophila.</title>
        <authorList>
            <person name="Taji T."/>
            <person name="Komatsu K."/>
            <person name="Katori T."/>
            <person name="Kawasaki Y."/>
            <person name="Sakata Y."/>
            <person name="Tanaka S."/>
            <person name="Kobayashi M."/>
            <person name="Toyoda A."/>
            <person name="Seki M."/>
            <person name="Shinozaki K."/>
        </authorList>
    </citation>
    <scope>NUCLEOTIDE SEQUENCE [LARGE SCALE MRNA]</scope>
    <source>
        <strain>cv. Shandong</strain>
    </source>
</reference>
<reference key="3">
    <citation type="journal article" date="2014" name="Plant Physiol.">
        <title>Functional and evolutionary analysis of the CASPARIAN STRIP MEMBRANE DOMAIN PROTEIN family.</title>
        <authorList>
            <person name="Roppolo D."/>
            <person name="Boeckmann B."/>
            <person name="Pfister A."/>
            <person name="Boutet E."/>
            <person name="Rubio M.C."/>
            <person name="Denervaud-Tendon V."/>
            <person name="Vermeer J.E."/>
            <person name="Gheyselinck J."/>
            <person name="Xenarios I."/>
            <person name="Geldner N."/>
        </authorList>
    </citation>
    <scope>GENE FAMILY</scope>
    <scope>NOMENCLATURE</scope>
</reference>
<sequence>MSYLGVGLSPVNVAGTKMKLMDRKVRLTELILRCSVCALALVAAILIATDTQVKEIFTIQKKAKYTDMKALVFLVVVNGIAAAYSLLHMVRCVVGMMKGSVLFSKPLAWAIFSGDQAIAYLTVAGVAAAAQSAAFAKLGEPELQWMKICTIYGKFCNQVGEGIATALLASIGMVLISSISAFALFRLYGGNKAQQGSRW</sequence>